<accession>P85106</accession>
<reference evidence="5" key="1">
    <citation type="journal article" date="1998" name="Insect Biochem. Mol. Biol.">
        <title>RF-amide peptides isolated from the midgut of the corn earworm, Helicoverpa zea, resemble pancreatic polypeptide.</title>
        <authorList>
            <person name="Huang Y."/>
            <person name="Brown M.R."/>
            <person name="Lee T.D."/>
            <person name="Crim J.W."/>
        </authorList>
    </citation>
    <scope>PROTEIN SEQUENCE</scope>
    <scope>FUNCTION</scope>
    <scope>SUBCELLULAR LOCATION</scope>
    <scope>TISSUE SPECIFICITY</scope>
    <scope>AMIDATION AT PHE-7</scope>
    <source>
        <tissue evidence="4">Midgut</tissue>
    </source>
</reference>
<dbReference type="GO" id="GO:0005576">
    <property type="term" value="C:extracellular region"/>
    <property type="evidence" value="ECO:0007669"/>
    <property type="project" value="UniProtKB-SubCell"/>
</dbReference>
<dbReference type="GO" id="GO:0005179">
    <property type="term" value="F:hormone activity"/>
    <property type="evidence" value="ECO:0007669"/>
    <property type="project" value="UniProtKB-KW"/>
</dbReference>
<dbReference type="GO" id="GO:0007586">
    <property type="term" value="P:digestion"/>
    <property type="evidence" value="ECO:0007669"/>
    <property type="project" value="UniProtKB-KW"/>
</dbReference>
<dbReference type="GO" id="GO:0007218">
    <property type="term" value="P:neuropeptide signaling pathway"/>
    <property type="evidence" value="ECO:0007669"/>
    <property type="project" value="UniProtKB-KW"/>
</dbReference>
<sequence>QAARPRF</sequence>
<name>NPF_HELZE</name>
<protein>
    <recommendedName>
        <fullName>Neuropeptide F</fullName>
        <shortName>NPF</shortName>
    </recommendedName>
    <alternativeName>
        <fullName>Hez-MP-I</fullName>
    </alternativeName>
</protein>
<feature type="chain" id="PRO_0000283085" description="Neuropeptide F">
    <location>
        <begin position="1" status="less than"/>
        <end position="7"/>
    </location>
</feature>
<feature type="modified residue" description="Phenylalanine amide" evidence="4">
    <location>
        <position position="7"/>
    </location>
</feature>
<feature type="non-terminal residue" evidence="5">
    <location>
        <position position="1"/>
    </location>
</feature>
<comment type="function">
    <text evidence="1 2 4">An integral part of the sensory system that mediates food signaling, providing the neural basis for the regulation of food response; coordinates larval foraging and social behavior changes during development. May have a hormonal role in females.</text>
</comment>
<comment type="subcellular location">
    <subcellularLocation>
        <location evidence="4">Secreted</location>
    </subcellularLocation>
</comment>
<comment type="tissue specificity">
    <text evidence="4">Expressed in the hemolymph, midgut and brain.</text>
</comment>
<comment type="similarity">
    <text evidence="3">Belongs to the NPY family.</text>
</comment>
<evidence type="ECO:0000250" key="1">
    <source>
        <dbReference type="UniProtKB" id="Q8MP00"/>
    </source>
</evidence>
<evidence type="ECO:0000250" key="2">
    <source>
        <dbReference type="UniProtKB" id="Q9VET0"/>
    </source>
</evidence>
<evidence type="ECO:0000255" key="3"/>
<evidence type="ECO:0000269" key="4">
    <source>
    </source>
</evidence>
<evidence type="ECO:0000305" key="5"/>
<organism>
    <name type="scientific">Helicoverpa zea</name>
    <name type="common">Corn earworm moth</name>
    <name type="synonym">Heliothis zea</name>
    <dbReference type="NCBI Taxonomy" id="7113"/>
    <lineage>
        <taxon>Eukaryota</taxon>
        <taxon>Metazoa</taxon>
        <taxon>Ecdysozoa</taxon>
        <taxon>Arthropoda</taxon>
        <taxon>Hexapoda</taxon>
        <taxon>Insecta</taxon>
        <taxon>Pterygota</taxon>
        <taxon>Neoptera</taxon>
        <taxon>Endopterygota</taxon>
        <taxon>Lepidoptera</taxon>
        <taxon>Glossata</taxon>
        <taxon>Ditrysia</taxon>
        <taxon>Noctuoidea</taxon>
        <taxon>Noctuidae</taxon>
        <taxon>Heliothinae</taxon>
        <taxon>Helicoverpa</taxon>
    </lineage>
</organism>
<proteinExistence type="evidence at protein level"/>
<keyword id="KW-0027">Amidation</keyword>
<keyword id="KW-0222">Digestion</keyword>
<keyword id="KW-0903">Direct protein sequencing</keyword>
<keyword id="KW-0372">Hormone</keyword>
<keyword id="KW-0527">Neuropeptide</keyword>
<keyword id="KW-0964">Secreted</keyword>